<protein>
    <recommendedName>
        <fullName evidence="1">Nicotinate-nucleotide--dimethylbenzimidazole phosphoribosyltransferase</fullName>
        <shortName evidence="1">NN:DBI PRT</shortName>
        <ecNumber evidence="1">2.4.2.21</ecNumber>
    </recommendedName>
    <alternativeName>
        <fullName evidence="1">N(1)-alpha-phosphoribosyltransferase</fullName>
    </alternativeName>
</protein>
<comment type="function">
    <text evidence="1">Catalyzes the synthesis of alpha-ribazole-5'-phosphate from nicotinate mononucleotide (NAMN) and 5,6-dimethylbenzimidazole (DMB).</text>
</comment>
<comment type="catalytic activity">
    <reaction evidence="1">
        <text>5,6-dimethylbenzimidazole + nicotinate beta-D-ribonucleotide = alpha-ribazole 5'-phosphate + nicotinate + H(+)</text>
        <dbReference type="Rhea" id="RHEA:11196"/>
        <dbReference type="ChEBI" id="CHEBI:15378"/>
        <dbReference type="ChEBI" id="CHEBI:15890"/>
        <dbReference type="ChEBI" id="CHEBI:32544"/>
        <dbReference type="ChEBI" id="CHEBI:57502"/>
        <dbReference type="ChEBI" id="CHEBI:57918"/>
        <dbReference type="EC" id="2.4.2.21"/>
    </reaction>
</comment>
<comment type="pathway">
    <text evidence="1">Nucleoside biosynthesis; alpha-ribazole biosynthesis; alpha-ribazole from 5,6-dimethylbenzimidazole: step 1/2.</text>
</comment>
<comment type="similarity">
    <text evidence="1">Belongs to the CobT family.</text>
</comment>
<name>COBT_PSEF5</name>
<feature type="chain" id="PRO_1000021614" description="Nicotinate-nucleotide--dimethylbenzimidazole phosphoribosyltransferase">
    <location>
        <begin position="1"/>
        <end position="351"/>
    </location>
</feature>
<feature type="active site" description="Proton acceptor" evidence="1">
    <location>
        <position position="317"/>
    </location>
</feature>
<dbReference type="EC" id="2.4.2.21" evidence="1"/>
<dbReference type="EMBL" id="CP000076">
    <property type="protein sequence ID" value="AAY93675.1"/>
    <property type="molecule type" value="Genomic_DNA"/>
</dbReference>
<dbReference type="RefSeq" id="WP_011062688.1">
    <property type="nucleotide sequence ID" value="NC_004129.6"/>
</dbReference>
<dbReference type="SMR" id="Q4K8C1"/>
<dbReference type="STRING" id="220664.PFL_4424"/>
<dbReference type="KEGG" id="pfl:PFL_4424"/>
<dbReference type="PATRIC" id="fig|220664.5.peg.4529"/>
<dbReference type="eggNOG" id="COG2038">
    <property type="taxonomic scope" value="Bacteria"/>
</dbReference>
<dbReference type="HOGENOM" id="CLU_002982_0_1_6"/>
<dbReference type="UniPathway" id="UPA00061">
    <property type="reaction ID" value="UER00516"/>
</dbReference>
<dbReference type="Proteomes" id="UP000008540">
    <property type="component" value="Chromosome"/>
</dbReference>
<dbReference type="GO" id="GO:0008939">
    <property type="term" value="F:nicotinate-nucleotide-dimethylbenzimidazole phosphoribosyltransferase activity"/>
    <property type="evidence" value="ECO:0007669"/>
    <property type="project" value="UniProtKB-UniRule"/>
</dbReference>
<dbReference type="GO" id="GO:0009236">
    <property type="term" value="P:cobalamin biosynthetic process"/>
    <property type="evidence" value="ECO:0007669"/>
    <property type="project" value="UniProtKB-KW"/>
</dbReference>
<dbReference type="CDD" id="cd02439">
    <property type="entry name" value="DMB-PRT_CobT"/>
    <property type="match status" value="1"/>
</dbReference>
<dbReference type="FunFam" id="3.40.50.10210:FF:000001">
    <property type="entry name" value="Nicotinate-nucleotide--dimethylbenzimidazole phosphoribosyltransferase"/>
    <property type="match status" value="1"/>
</dbReference>
<dbReference type="Gene3D" id="1.10.1610.10">
    <property type="match status" value="1"/>
</dbReference>
<dbReference type="Gene3D" id="3.40.50.10210">
    <property type="match status" value="1"/>
</dbReference>
<dbReference type="HAMAP" id="MF_00230">
    <property type="entry name" value="CobT"/>
    <property type="match status" value="1"/>
</dbReference>
<dbReference type="InterPro" id="IPR003200">
    <property type="entry name" value="Nict_dMeBzImd_PRibTrfase"/>
</dbReference>
<dbReference type="InterPro" id="IPR017846">
    <property type="entry name" value="Nict_dMeBzImd_PRibTrfase_bact"/>
</dbReference>
<dbReference type="InterPro" id="IPR023195">
    <property type="entry name" value="Nict_dMeBzImd_PRibTrfase_N"/>
</dbReference>
<dbReference type="InterPro" id="IPR036087">
    <property type="entry name" value="Nict_dMeBzImd_PRibTrfase_sf"/>
</dbReference>
<dbReference type="NCBIfam" id="TIGR03160">
    <property type="entry name" value="cobT_DBIPRT"/>
    <property type="match status" value="1"/>
</dbReference>
<dbReference type="NCBIfam" id="NF000996">
    <property type="entry name" value="PRK00105.1"/>
    <property type="match status" value="1"/>
</dbReference>
<dbReference type="PANTHER" id="PTHR43463">
    <property type="entry name" value="NICOTINATE-NUCLEOTIDE--DIMETHYLBENZIMIDAZOLE PHOSPHORIBOSYLTRANSFERASE"/>
    <property type="match status" value="1"/>
</dbReference>
<dbReference type="PANTHER" id="PTHR43463:SF1">
    <property type="entry name" value="NICOTINATE-NUCLEOTIDE--DIMETHYLBENZIMIDAZOLE PHOSPHORIBOSYLTRANSFERASE"/>
    <property type="match status" value="1"/>
</dbReference>
<dbReference type="Pfam" id="PF02277">
    <property type="entry name" value="DBI_PRT"/>
    <property type="match status" value="1"/>
</dbReference>
<dbReference type="SUPFAM" id="SSF52733">
    <property type="entry name" value="Nicotinate mononucleotide:5,6-dimethylbenzimidazole phosphoribosyltransferase (CobT)"/>
    <property type="match status" value="1"/>
</dbReference>
<organism>
    <name type="scientific">Pseudomonas fluorescens (strain ATCC BAA-477 / NRRL B-23932 / Pf-5)</name>
    <dbReference type="NCBI Taxonomy" id="220664"/>
    <lineage>
        <taxon>Bacteria</taxon>
        <taxon>Pseudomonadati</taxon>
        <taxon>Pseudomonadota</taxon>
        <taxon>Gammaproteobacteria</taxon>
        <taxon>Pseudomonadales</taxon>
        <taxon>Pseudomonadaceae</taxon>
        <taxon>Pseudomonas</taxon>
    </lineage>
</organism>
<accession>Q4K8C1</accession>
<keyword id="KW-0169">Cobalamin biosynthesis</keyword>
<keyword id="KW-0328">Glycosyltransferase</keyword>
<keyword id="KW-0808">Transferase</keyword>
<gene>
    <name evidence="1" type="primary">cobT</name>
    <name type="ordered locus">PFL_4424</name>
</gene>
<evidence type="ECO:0000255" key="1">
    <source>
        <dbReference type="HAMAP-Rule" id="MF_00230"/>
    </source>
</evidence>
<sequence>MNNSWWLEPCKAIDTQMVEQALARQQQLTKPAGSLGRLEPLAVRLAGLQGRLKPGIERLWIAIFAGDHGVVAEGVSAYPQEVTGQMLLNFVSGGAAISVLARQLQAQLEVVDLGTVTPGLNLPGVRHLNLGAGTQNFVQGPAMTRAQGEQALQAGRDSALRAHADGAQLFIGGEMGIGNTTAASAIACALLGIPVAQLAGPGTGLNAEGVNHKAQVIERALALHDASRGDALQTLFNLGGFEVAALVGAYLACAQEGIAVLVDGFICSVAALVAVRLNPACAPWLLFAHQGAEPGHRHVLQTLQAEPLLDLGLRLGEGSGAALAVPLLRLACDLHGQMATFAEAAVADRPA</sequence>
<proteinExistence type="inferred from homology"/>
<reference key="1">
    <citation type="journal article" date="2005" name="Nat. Biotechnol.">
        <title>Complete genome sequence of the plant commensal Pseudomonas fluorescens Pf-5.</title>
        <authorList>
            <person name="Paulsen I.T."/>
            <person name="Press C.M."/>
            <person name="Ravel J."/>
            <person name="Kobayashi D.Y."/>
            <person name="Myers G.S.A."/>
            <person name="Mavrodi D.V."/>
            <person name="DeBoy R.T."/>
            <person name="Seshadri R."/>
            <person name="Ren Q."/>
            <person name="Madupu R."/>
            <person name="Dodson R.J."/>
            <person name="Durkin A.S."/>
            <person name="Brinkac L.M."/>
            <person name="Daugherty S.C."/>
            <person name="Sullivan S.A."/>
            <person name="Rosovitz M.J."/>
            <person name="Gwinn M.L."/>
            <person name="Zhou L."/>
            <person name="Schneider D.J."/>
            <person name="Cartinhour S.W."/>
            <person name="Nelson W.C."/>
            <person name="Weidman J."/>
            <person name="Watkins K."/>
            <person name="Tran K."/>
            <person name="Khouri H."/>
            <person name="Pierson E.A."/>
            <person name="Pierson L.S. III"/>
            <person name="Thomashow L.S."/>
            <person name="Loper J.E."/>
        </authorList>
    </citation>
    <scope>NUCLEOTIDE SEQUENCE [LARGE SCALE GENOMIC DNA]</scope>
    <source>
        <strain>ATCC BAA-477 / NRRL B-23932 / Pf-5</strain>
    </source>
</reference>